<keyword id="KW-0238">DNA-binding</keyword>
<keyword id="KW-1017">Isopeptide bond</keyword>
<keyword id="KW-0479">Metal-binding</keyword>
<keyword id="KW-0539">Nucleus</keyword>
<keyword id="KW-1267">Proteomics identification</keyword>
<keyword id="KW-1185">Reference proteome</keyword>
<keyword id="KW-0677">Repeat</keyword>
<keyword id="KW-0804">Transcription</keyword>
<keyword id="KW-0805">Transcription regulation</keyword>
<keyword id="KW-0832">Ubl conjugation</keyword>
<keyword id="KW-0862">Zinc</keyword>
<keyword id="KW-0863">Zinc-finger</keyword>
<feature type="chain" id="PRO_0000247517" description="Zinc finger protein 467">
    <location>
        <begin position="1"/>
        <end position="595"/>
    </location>
</feature>
<feature type="zinc finger region" description="C2H2-type 1" evidence="2">
    <location>
        <begin position="160"/>
        <end position="182"/>
    </location>
</feature>
<feature type="zinc finger region" description="C2H2-type 2" evidence="2">
    <location>
        <begin position="188"/>
        <end position="210"/>
    </location>
</feature>
<feature type="zinc finger region" description="C2H2-type 3" evidence="2">
    <location>
        <begin position="216"/>
        <end position="238"/>
    </location>
</feature>
<feature type="zinc finger region" description="C2H2-type 4" evidence="2">
    <location>
        <begin position="244"/>
        <end position="266"/>
    </location>
</feature>
<feature type="zinc finger region" description="C2H2-type 5" evidence="2">
    <location>
        <begin position="272"/>
        <end position="294"/>
    </location>
</feature>
<feature type="zinc finger region" description="C2H2-type 6" evidence="2">
    <location>
        <begin position="300"/>
        <end position="322"/>
    </location>
</feature>
<feature type="zinc finger region" description="C2H2-type 7" evidence="2">
    <location>
        <begin position="355"/>
        <end position="377"/>
    </location>
</feature>
<feature type="zinc finger region" description="C2H2-type 8" evidence="2">
    <location>
        <begin position="431"/>
        <end position="453"/>
    </location>
</feature>
<feature type="zinc finger region" description="C2H2-type 9" evidence="2">
    <location>
        <begin position="459"/>
        <end position="481"/>
    </location>
</feature>
<feature type="zinc finger region" description="C2H2-type 10" evidence="2">
    <location>
        <begin position="487"/>
        <end position="509"/>
    </location>
</feature>
<feature type="zinc finger region" description="C2H2-type 11" evidence="2">
    <location>
        <begin position="515"/>
        <end position="537"/>
    </location>
</feature>
<feature type="zinc finger region" description="C2H2-type 12" evidence="2">
    <location>
        <begin position="543"/>
        <end position="565"/>
    </location>
</feature>
<feature type="region of interest" description="Disordered" evidence="3">
    <location>
        <begin position="1"/>
        <end position="67"/>
    </location>
</feature>
<feature type="region of interest" description="Disordered" evidence="3">
    <location>
        <begin position="313"/>
        <end position="350"/>
    </location>
</feature>
<feature type="compositionally biased region" description="Low complexity" evidence="3">
    <location>
        <begin position="325"/>
        <end position="343"/>
    </location>
</feature>
<feature type="cross-link" description="Glycyl lysine isopeptide (Lys-Gly) (interchain with G-Cter in SUMO2)" evidence="5">
    <location>
        <position position="97"/>
    </location>
</feature>
<feature type="cross-link" description="Glycyl lysine isopeptide (Lys-Gly) (interchain with G-Cter in SUMO2)" evidence="5">
    <location>
        <position position="368"/>
    </location>
</feature>
<feature type="sequence variant" id="VAR_052835" description="In dbSNP:rs6965332.">
    <original>T</original>
    <variation>A</variation>
    <location>
        <position position="324"/>
    </location>
</feature>
<reference key="1">
    <citation type="journal article" date="2004" name="Genome Res.">
        <title>The status, quality, and expansion of the NIH full-length cDNA project: the Mammalian Gene Collection (MGC).</title>
        <authorList>
            <consortium name="The MGC Project Team"/>
        </authorList>
    </citation>
    <scope>NUCLEOTIDE SEQUENCE [LARGE SCALE MRNA]</scope>
    <source>
        <tissue>Mammary gland</tissue>
    </source>
</reference>
<reference key="2">
    <citation type="journal article" date="2017" name="Nat. Struct. Mol. Biol.">
        <title>Site-specific mapping of the human SUMO proteome reveals co-modification with phosphorylation.</title>
        <authorList>
            <person name="Hendriks I.A."/>
            <person name="Lyon D."/>
            <person name="Young C."/>
            <person name="Jensen L.J."/>
            <person name="Vertegaal A.C."/>
            <person name="Nielsen M.L."/>
        </authorList>
    </citation>
    <scope>SUMOYLATION [LARGE SCALE ANALYSIS] AT LYS-97 AND LYS-368</scope>
    <scope>IDENTIFICATION BY MASS SPECTROMETRY [LARGE SCALE ANALYSIS]</scope>
</reference>
<dbReference type="EMBL" id="BC052625">
    <property type="protein sequence ID" value="AAH52625.1"/>
    <property type="molecule type" value="mRNA"/>
</dbReference>
<dbReference type="CCDS" id="CCDS5899.1"/>
<dbReference type="RefSeq" id="NP_997219.1">
    <property type="nucleotide sequence ID" value="NM_207336.3"/>
</dbReference>
<dbReference type="RefSeq" id="XP_005250016.1">
    <property type="nucleotide sequence ID" value="XM_005249959.5"/>
</dbReference>
<dbReference type="RefSeq" id="XP_005250017.1">
    <property type="nucleotide sequence ID" value="XM_005249960.6"/>
</dbReference>
<dbReference type="RefSeq" id="XP_005250018.1">
    <property type="nucleotide sequence ID" value="XM_005249961.6"/>
</dbReference>
<dbReference type="RefSeq" id="XP_011514160.1">
    <property type="nucleotide sequence ID" value="XM_011515858.1"/>
</dbReference>
<dbReference type="RefSeq" id="XP_047275892.1">
    <property type="nucleotide sequence ID" value="XM_047419936.1"/>
</dbReference>
<dbReference type="SMR" id="Q7Z7K2"/>
<dbReference type="BioGRID" id="127969">
    <property type="interactions" value="300"/>
</dbReference>
<dbReference type="FunCoup" id="Q7Z7K2">
    <property type="interactions" value="10"/>
</dbReference>
<dbReference type="IntAct" id="Q7Z7K2">
    <property type="interactions" value="165"/>
</dbReference>
<dbReference type="STRING" id="9606.ENSP00000304769"/>
<dbReference type="GlyGen" id="Q7Z7K2">
    <property type="glycosylation" value="2 sites"/>
</dbReference>
<dbReference type="iPTMnet" id="Q7Z7K2"/>
<dbReference type="PhosphoSitePlus" id="Q7Z7K2"/>
<dbReference type="BioMuta" id="ZNF467"/>
<dbReference type="DMDM" id="74762444"/>
<dbReference type="jPOST" id="Q7Z7K2"/>
<dbReference type="MassIVE" id="Q7Z7K2"/>
<dbReference type="PaxDb" id="9606-ENSP00000304769"/>
<dbReference type="PeptideAtlas" id="Q7Z7K2"/>
<dbReference type="ProteomicsDB" id="69556"/>
<dbReference type="Pumba" id="Q7Z7K2"/>
<dbReference type="TopDownProteomics" id="Q7Z7K2"/>
<dbReference type="Antibodypedia" id="51657">
    <property type="antibodies" value="13 antibodies from 8 providers"/>
</dbReference>
<dbReference type="DNASU" id="168544"/>
<dbReference type="Ensembl" id="ENST00000302017.4">
    <property type="protein sequence ID" value="ENSP00000304769.3"/>
    <property type="gene ID" value="ENSG00000181444.13"/>
</dbReference>
<dbReference type="GeneID" id="168544"/>
<dbReference type="KEGG" id="hsa:168544"/>
<dbReference type="MANE-Select" id="ENST00000302017.4">
    <property type="protein sequence ID" value="ENSP00000304769.3"/>
    <property type="RefSeq nucleotide sequence ID" value="NM_207336.3"/>
    <property type="RefSeq protein sequence ID" value="NP_997219.1"/>
</dbReference>
<dbReference type="UCSC" id="uc003wgd.3">
    <property type="organism name" value="human"/>
</dbReference>
<dbReference type="AGR" id="HGNC:23154"/>
<dbReference type="CTD" id="168544"/>
<dbReference type="GeneCards" id="ZNF467"/>
<dbReference type="HGNC" id="HGNC:23154">
    <property type="gene designation" value="ZNF467"/>
</dbReference>
<dbReference type="HPA" id="ENSG00000181444">
    <property type="expression patterns" value="Low tissue specificity"/>
</dbReference>
<dbReference type="MIM" id="614040">
    <property type="type" value="gene"/>
</dbReference>
<dbReference type="neXtProt" id="NX_Q7Z7K2"/>
<dbReference type="OpenTargets" id="ENSG00000181444"/>
<dbReference type="PharmGKB" id="PA134886769"/>
<dbReference type="VEuPathDB" id="HostDB:ENSG00000181444"/>
<dbReference type="eggNOG" id="KOG1721">
    <property type="taxonomic scope" value="Eukaryota"/>
</dbReference>
<dbReference type="GeneTree" id="ENSGT00940000162497"/>
<dbReference type="HOGENOM" id="CLU_002678_73_2_1"/>
<dbReference type="InParanoid" id="Q7Z7K2"/>
<dbReference type="OMA" id="QCAQCTR"/>
<dbReference type="OrthoDB" id="8117402at2759"/>
<dbReference type="PAN-GO" id="Q7Z7K2">
    <property type="GO annotations" value="4 GO annotations based on evolutionary models"/>
</dbReference>
<dbReference type="PhylomeDB" id="Q7Z7K2"/>
<dbReference type="TreeFam" id="TF326846"/>
<dbReference type="PathwayCommons" id="Q7Z7K2"/>
<dbReference type="Reactome" id="R-HSA-381340">
    <property type="pathway name" value="Transcriptional regulation of white adipocyte differentiation"/>
</dbReference>
<dbReference type="SignaLink" id="Q7Z7K2"/>
<dbReference type="BioGRID-ORCS" id="168544">
    <property type="hits" value="12 hits in 1180 CRISPR screens"/>
</dbReference>
<dbReference type="GenomeRNAi" id="168544"/>
<dbReference type="Pharos" id="Q7Z7K2">
    <property type="development level" value="Tdark"/>
</dbReference>
<dbReference type="PRO" id="PR:Q7Z7K2"/>
<dbReference type="Proteomes" id="UP000005640">
    <property type="component" value="Chromosome 7"/>
</dbReference>
<dbReference type="RNAct" id="Q7Z7K2">
    <property type="molecule type" value="protein"/>
</dbReference>
<dbReference type="Bgee" id="ENSG00000181444">
    <property type="expression patterns" value="Expressed in monocyte and 117 other cell types or tissues"/>
</dbReference>
<dbReference type="ExpressionAtlas" id="Q7Z7K2">
    <property type="expression patterns" value="baseline and differential"/>
</dbReference>
<dbReference type="GO" id="GO:0005634">
    <property type="term" value="C:nucleus"/>
    <property type="evidence" value="ECO:0000318"/>
    <property type="project" value="GO_Central"/>
</dbReference>
<dbReference type="GO" id="GO:0000981">
    <property type="term" value="F:DNA-binding transcription factor activity, RNA polymerase II-specific"/>
    <property type="evidence" value="ECO:0000318"/>
    <property type="project" value="GO_Central"/>
</dbReference>
<dbReference type="GO" id="GO:0000978">
    <property type="term" value="F:RNA polymerase II cis-regulatory region sequence-specific DNA binding"/>
    <property type="evidence" value="ECO:0000318"/>
    <property type="project" value="GO_Central"/>
</dbReference>
<dbReference type="GO" id="GO:0008270">
    <property type="term" value="F:zinc ion binding"/>
    <property type="evidence" value="ECO:0007669"/>
    <property type="project" value="UniProtKB-KW"/>
</dbReference>
<dbReference type="GO" id="GO:0006357">
    <property type="term" value="P:regulation of transcription by RNA polymerase II"/>
    <property type="evidence" value="ECO:0000318"/>
    <property type="project" value="GO_Central"/>
</dbReference>
<dbReference type="FunFam" id="3.30.160.60:FF:000214">
    <property type="entry name" value="replication initiator 1 isoform X1"/>
    <property type="match status" value="1"/>
</dbReference>
<dbReference type="FunFam" id="3.30.160.60:FF:000750">
    <property type="entry name" value="replication initiator 1 isoform X2"/>
    <property type="match status" value="2"/>
</dbReference>
<dbReference type="FunFam" id="3.30.160.60:FF:002343">
    <property type="entry name" value="Zinc finger protein 33A"/>
    <property type="match status" value="1"/>
</dbReference>
<dbReference type="FunFam" id="3.30.160.60:FF:001598">
    <property type="entry name" value="Zinc finger protein 467"/>
    <property type="match status" value="1"/>
</dbReference>
<dbReference type="FunFam" id="3.30.160.60:FF:001683">
    <property type="entry name" value="Zinc finger protein 467"/>
    <property type="match status" value="1"/>
</dbReference>
<dbReference type="FunFam" id="3.30.160.60:FF:001800">
    <property type="entry name" value="Zinc finger protein 467"/>
    <property type="match status" value="1"/>
</dbReference>
<dbReference type="FunFam" id="3.30.160.60:FF:001993">
    <property type="entry name" value="Zinc finger protein 467"/>
    <property type="match status" value="1"/>
</dbReference>
<dbReference type="FunFam" id="3.30.160.60:FF:001789">
    <property type="entry name" value="zinc finger protein 467"/>
    <property type="match status" value="1"/>
</dbReference>
<dbReference type="FunFam" id="3.30.160.60:FF:000320">
    <property type="entry name" value="Zinc finger protein 777"/>
    <property type="match status" value="3"/>
</dbReference>
<dbReference type="Gene3D" id="3.30.160.60">
    <property type="entry name" value="Classic Zinc Finger"/>
    <property type="match status" value="12"/>
</dbReference>
<dbReference type="InterPro" id="IPR050717">
    <property type="entry name" value="C2H2-ZF_Transcription_Reg"/>
</dbReference>
<dbReference type="InterPro" id="IPR036236">
    <property type="entry name" value="Znf_C2H2_sf"/>
</dbReference>
<dbReference type="InterPro" id="IPR013087">
    <property type="entry name" value="Znf_C2H2_type"/>
</dbReference>
<dbReference type="PANTHER" id="PTHR14196">
    <property type="entry name" value="ODD-SKIPPED - RELATED"/>
    <property type="match status" value="1"/>
</dbReference>
<dbReference type="PANTHER" id="PTHR14196:SF12">
    <property type="entry name" value="ZINC FINGER PROTEIN 208-LIKE"/>
    <property type="match status" value="1"/>
</dbReference>
<dbReference type="Pfam" id="PF00096">
    <property type="entry name" value="zf-C2H2"/>
    <property type="match status" value="11"/>
</dbReference>
<dbReference type="SMART" id="SM00355">
    <property type="entry name" value="ZnF_C2H2"/>
    <property type="match status" value="12"/>
</dbReference>
<dbReference type="SUPFAM" id="SSF57667">
    <property type="entry name" value="beta-beta-alpha zinc fingers"/>
    <property type="match status" value="7"/>
</dbReference>
<dbReference type="PROSITE" id="PS00028">
    <property type="entry name" value="ZINC_FINGER_C2H2_1"/>
    <property type="match status" value="12"/>
</dbReference>
<dbReference type="PROSITE" id="PS50157">
    <property type="entry name" value="ZINC_FINGER_C2H2_2"/>
    <property type="match status" value="12"/>
</dbReference>
<comment type="function">
    <text evidence="1">Transcription factor that promotes adipocyte differentiation and suppresses osteoblast differentiation in the bone marrow. Enhances the osteoclast-supporting ability of stromal cells. Binds with STAT3 the consensus sequence 5'-CTTCTGGGAAGA-3' of the acute phase response element (APRE). Transactivates several promoters including FOS, OSM and PPARG. Recruits a histone deacetylase complex (By similarity).</text>
</comment>
<comment type="subunit">
    <text evidence="1">Interacts with STAT3. Enhances STAT3 activity by keeping it in the nucleus (By similarity).</text>
</comment>
<comment type="interaction">
    <interactant intactId="EBI-11986485">
        <id>Q7Z7K2</id>
    </interactant>
    <interactant intactId="EBI-11953334">
        <id>P60328</id>
        <label>KRTAP12-3</label>
    </interactant>
    <organismsDiffer>false</organismsDiffer>
    <experiments>3</experiments>
</comment>
<comment type="interaction">
    <interactant intactId="EBI-11986485">
        <id>Q7Z7K2</id>
    </interactant>
    <interactant intactId="EBI-739909">
        <id>Q969R5</id>
        <label>L3MBTL2</label>
    </interactant>
    <organismsDiffer>false</organismsDiffer>
    <experiments>3</experiments>
</comment>
<comment type="interaction">
    <interactant intactId="EBI-11986485">
        <id>Q7Z7K2</id>
    </interactant>
    <interactant intactId="EBI-2798728">
        <id>P61968</id>
        <label>LMO4</label>
    </interactant>
    <organismsDiffer>false</organismsDiffer>
    <experiments>3</experiments>
</comment>
<comment type="interaction">
    <interactant intactId="EBI-11986485">
        <id>Q7Z7K2</id>
    </interactant>
    <interactant intactId="EBI-11741437">
        <id>Q08117-2</id>
        <label>TLE5</label>
    </interactant>
    <organismsDiffer>false</organismsDiffer>
    <experiments>3</experiments>
</comment>
<comment type="subcellular location">
    <subcellularLocation>
        <location evidence="1">Nucleus</location>
    </subcellularLocation>
</comment>
<comment type="similarity">
    <text evidence="4">Belongs to the krueppel C2H2-type zinc-finger protein family.</text>
</comment>
<accession>Q7Z7K2</accession>
<proteinExistence type="evidence at protein level"/>
<name>ZN467_HUMAN</name>
<protein>
    <recommendedName>
        <fullName>Zinc finger protein 467</fullName>
    </recommendedName>
</protein>
<organism>
    <name type="scientific">Homo sapiens</name>
    <name type="common">Human</name>
    <dbReference type="NCBI Taxonomy" id="9606"/>
    <lineage>
        <taxon>Eukaryota</taxon>
        <taxon>Metazoa</taxon>
        <taxon>Chordata</taxon>
        <taxon>Craniata</taxon>
        <taxon>Vertebrata</taxon>
        <taxon>Euteleostomi</taxon>
        <taxon>Mammalia</taxon>
        <taxon>Eutheria</taxon>
        <taxon>Euarchontoglires</taxon>
        <taxon>Primates</taxon>
        <taxon>Haplorrhini</taxon>
        <taxon>Catarrhini</taxon>
        <taxon>Hominidae</taxon>
        <taxon>Homo</taxon>
    </lineage>
</organism>
<evidence type="ECO:0000250" key="1"/>
<evidence type="ECO:0000255" key="2">
    <source>
        <dbReference type="PROSITE-ProRule" id="PRU00042"/>
    </source>
</evidence>
<evidence type="ECO:0000256" key="3">
    <source>
        <dbReference type="SAM" id="MobiDB-lite"/>
    </source>
</evidence>
<evidence type="ECO:0000305" key="4"/>
<evidence type="ECO:0007744" key="5">
    <source>
    </source>
</evidence>
<gene>
    <name type="primary">ZNF467</name>
</gene>
<sequence length="595" mass="65124">MRETLEALSSLGFSVGQPEMAPQSEPREGSHNAQEQMSSSREERALGVCSGHEAPTPEEGAHTEQAEAPCRGQACSAQKAQPVGTCPGEEWMIRKVKVEDEDQEAEEEVEWPQHLSLLPSPFPAPDLGHLAAAYKLEPGAPGALSGLALSGWGPMPEKPYGCGECERRFRDQLTLRLHQRLHRGEGPCACPDCGRSFTQRAHMLLHQRSHRGERPFPCSECDKRFSKKAHLTRHLRTHTGERPYPCAECGKRFSQKIHLGSHQKTHTGERPFPCTECEKRFRKKTHLIRHQRIHTGERPYQCAQCARSFTHKQHLVRHQRVHQTAGPARPSPDSSASPHSTAPSPTPSFPGPKPFACSDCGLSFGWKKNLATHQCLHRSEGRPFGCDECALGATVDAPAAKPLASAPGGPGCGPGSDPVVPQRAPSGERSFFCPDCGRGFSHGQHLARHPRVHTGERPFACTQCDRRFGSRPNLVAHSRAHSGARPFACAQCGRRFSRKSHLGRHQAVHTGSRPHACAVCARSFSSKTNLVRHQAIHTGSRPFSCPQCGKSFSRKTHLVRHQLIHGEAAHAAPDAALAAPAWSAPPEVAPPPLFF</sequence>